<gene>
    <name evidence="1" type="primary">cmoA</name>
    <name type="ordered locus">VC0395_A0733</name>
    <name type="ordered locus">VC395_1230</name>
</gene>
<evidence type="ECO:0000255" key="1">
    <source>
        <dbReference type="HAMAP-Rule" id="MF_01589"/>
    </source>
</evidence>
<protein>
    <recommendedName>
        <fullName evidence="1">Carboxy-S-adenosyl-L-methionine synthase</fullName>
        <shortName evidence="1">Cx-SAM synthase</shortName>
        <ecNumber evidence="1">2.1.3.-</ecNumber>
    </recommendedName>
</protein>
<dbReference type="EC" id="2.1.3.-" evidence="1"/>
<dbReference type="EMBL" id="CP000627">
    <property type="protein sequence ID" value="ABQ21831.1"/>
    <property type="molecule type" value="Genomic_DNA"/>
</dbReference>
<dbReference type="EMBL" id="CP001235">
    <property type="protein sequence ID" value="ACP09240.1"/>
    <property type="molecule type" value="Genomic_DNA"/>
</dbReference>
<dbReference type="SMR" id="A5F278"/>
<dbReference type="KEGG" id="vco:VC0395_A0733"/>
<dbReference type="KEGG" id="vcr:VC395_1230"/>
<dbReference type="PATRIC" id="fig|345073.21.peg.1197"/>
<dbReference type="eggNOG" id="COG4106">
    <property type="taxonomic scope" value="Bacteria"/>
</dbReference>
<dbReference type="HOGENOM" id="CLU_078475_0_0_6"/>
<dbReference type="Proteomes" id="UP000000249">
    <property type="component" value="Chromosome 2"/>
</dbReference>
<dbReference type="GO" id="GO:0016743">
    <property type="term" value="F:carboxyl- or carbamoyltransferase activity"/>
    <property type="evidence" value="ECO:0007669"/>
    <property type="project" value="UniProtKB-UniRule"/>
</dbReference>
<dbReference type="GO" id="GO:1904047">
    <property type="term" value="F:S-adenosyl-L-methionine binding"/>
    <property type="evidence" value="ECO:0007669"/>
    <property type="project" value="UniProtKB-UniRule"/>
</dbReference>
<dbReference type="GO" id="GO:0002098">
    <property type="term" value="P:tRNA wobble uridine modification"/>
    <property type="evidence" value="ECO:0007669"/>
    <property type="project" value="InterPro"/>
</dbReference>
<dbReference type="CDD" id="cd02440">
    <property type="entry name" value="AdoMet_MTases"/>
    <property type="match status" value="1"/>
</dbReference>
<dbReference type="Gene3D" id="3.40.50.150">
    <property type="entry name" value="Vaccinia Virus protein VP39"/>
    <property type="match status" value="1"/>
</dbReference>
<dbReference type="HAMAP" id="MF_01589">
    <property type="entry name" value="Cx_SAM_synthase"/>
    <property type="match status" value="1"/>
</dbReference>
<dbReference type="InterPro" id="IPR005271">
    <property type="entry name" value="CmoA"/>
</dbReference>
<dbReference type="InterPro" id="IPR041698">
    <property type="entry name" value="Methyltransf_25"/>
</dbReference>
<dbReference type="InterPro" id="IPR029063">
    <property type="entry name" value="SAM-dependent_MTases_sf"/>
</dbReference>
<dbReference type="NCBIfam" id="TIGR00740">
    <property type="entry name" value="carboxy-S-adenosyl-L-methionine synthase CmoA"/>
    <property type="match status" value="1"/>
</dbReference>
<dbReference type="NCBIfam" id="NF011995">
    <property type="entry name" value="PRK15451.1"/>
    <property type="match status" value="1"/>
</dbReference>
<dbReference type="PANTHER" id="PTHR43861:SF2">
    <property type="entry name" value="CARBOXY-S-ADENOSYL-L-METHIONINE SYNTHASE"/>
    <property type="match status" value="1"/>
</dbReference>
<dbReference type="PANTHER" id="PTHR43861">
    <property type="entry name" value="TRANS-ACONITATE 2-METHYLTRANSFERASE-RELATED"/>
    <property type="match status" value="1"/>
</dbReference>
<dbReference type="Pfam" id="PF13649">
    <property type="entry name" value="Methyltransf_25"/>
    <property type="match status" value="1"/>
</dbReference>
<dbReference type="PIRSF" id="PIRSF006325">
    <property type="entry name" value="MeTrfase_bac"/>
    <property type="match status" value="1"/>
</dbReference>
<dbReference type="SUPFAM" id="SSF53335">
    <property type="entry name" value="S-adenosyl-L-methionine-dependent methyltransferases"/>
    <property type="match status" value="1"/>
</dbReference>
<keyword id="KW-0949">S-adenosyl-L-methionine</keyword>
<keyword id="KW-0808">Transferase</keyword>
<name>CMOA_VIBC3</name>
<proteinExistence type="inferred from homology"/>
<feature type="chain" id="PRO_1000073616" description="Carboxy-S-adenosyl-L-methionine synthase">
    <location>
        <begin position="1"/>
        <end position="246"/>
    </location>
</feature>
<feature type="binding site" evidence="1">
    <location>
        <position position="43"/>
    </location>
    <ligand>
        <name>S-adenosyl-L-methionine</name>
        <dbReference type="ChEBI" id="CHEBI:59789"/>
    </ligand>
</feature>
<feature type="binding site" evidence="1">
    <location>
        <begin position="68"/>
        <end position="70"/>
    </location>
    <ligand>
        <name>S-adenosyl-L-methionine</name>
        <dbReference type="ChEBI" id="CHEBI:59789"/>
    </ligand>
</feature>
<feature type="binding site" evidence="1">
    <location>
        <begin position="93"/>
        <end position="94"/>
    </location>
    <ligand>
        <name>S-adenosyl-L-methionine</name>
        <dbReference type="ChEBI" id="CHEBI:59789"/>
    </ligand>
</feature>
<feature type="binding site" evidence="1">
    <location>
        <begin position="121"/>
        <end position="122"/>
    </location>
    <ligand>
        <name>S-adenosyl-L-methionine</name>
        <dbReference type="ChEBI" id="CHEBI:59789"/>
    </ligand>
</feature>
<feature type="binding site" evidence="1">
    <location>
        <position position="136"/>
    </location>
    <ligand>
        <name>S-adenosyl-L-methionine</name>
        <dbReference type="ChEBI" id="CHEBI:59789"/>
    </ligand>
</feature>
<feature type="binding site" evidence="1">
    <location>
        <position position="203"/>
    </location>
    <ligand>
        <name>S-adenosyl-L-methionine</name>
        <dbReference type="ChEBI" id="CHEBI:59789"/>
    </ligand>
</feature>
<reference key="1">
    <citation type="submission" date="2007-03" db="EMBL/GenBank/DDBJ databases">
        <authorList>
            <person name="Heidelberg J."/>
        </authorList>
    </citation>
    <scope>NUCLEOTIDE SEQUENCE [LARGE SCALE GENOMIC DNA]</scope>
    <source>
        <strain>ATCC 39541 / Classical Ogawa 395 / O395</strain>
    </source>
</reference>
<reference key="2">
    <citation type="journal article" date="2008" name="PLoS ONE">
        <title>A recalibrated molecular clock and independent origins for the cholera pandemic clones.</title>
        <authorList>
            <person name="Feng L."/>
            <person name="Reeves P.R."/>
            <person name="Lan R."/>
            <person name="Ren Y."/>
            <person name="Gao C."/>
            <person name="Zhou Z."/>
            <person name="Ren Y."/>
            <person name="Cheng J."/>
            <person name="Wang W."/>
            <person name="Wang J."/>
            <person name="Qian W."/>
            <person name="Li D."/>
            <person name="Wang L."/>
        </authorList>
    </citation>
    <scope>NUCLEOTIDE SEQUENCE [LARGE SCALE GENOMIC DNA]</scope>
    <source>
        <strain>ATCC 39541 / Classical Ogawa 395 / O395</strain>
    </source>
</reference>
<sequence length="246" mass="27787">MRSAMNPKDTLFSAPIDKIGDFTFDERVAEVFPDMIQRSVPGYSNIISAIGMLAERFVKPHSKIYDLGCSLGAATLSMRRHIKQEGCQIIAVDNSAAMVERCKLHLNAYRSDTPVQVIEADIRDIAIENASVVVLNFTLQFLAPDDRYALLEKIYAGLRPGGILILSEKFVFSDQEAHELLIDLHHDFKRANGYSELEISQKRSAIENVMRPDSIQTHKQRFATLGFSSFEVWFQCFNFGSMFAIK</sequence>
<organism>
    <name type="scientific">Vibrio cholerae serotype O1 (strain ATCC 39541 / Classical Ogawa 395 / O395)</name>
    <dbReference type="NCBI Taxonomy" id="345073"/>
    <lineage>
        <taxon>Bacteria</taxon>
        <taxon>Pseudomonadati</taxon>
        <taxon>Pseudomonadota</taxon>
        <taxon>Gammaproteobacteria</taxon>
        <taxon>Vibrionales</taxon>
        <taxon>Vibrionaceae</taxon>
        <taxon>Vibrio</taxon>
    </lineage>
</organism>
<accession>A5F278</accession>
<accession>C3LZM4</accession>
<comment type="function">
    <text evidence="1">Catalyzes the conversion of S-adenosyl-L-methionine (SAM) to carboxy-S-adenosyl-L-methionine (Cx-SAM).</text>
</comment>
<comment type="catalytic activity">
    <reaction evidence="1">
        <text>prephenate + S-adenosyl-L-methionine = carboxy-S-adenosyl-L-methionine + 3-phenylpyruvate + H2O</text>
        <dbReference type="Rhea" id="RHEA:51692"/>
        <dbReference type="ChEBI" id="CHEBI:15377"/>
        <dbReference type="ChEBI" id="CHEBI:18005"/>
        <dbReference type="ChEBI" id="CHEBI:29934"/>
        <dbReference type="ChEBI" id="CHEBI:59789"/>
        <dbReference type="ChEBI" id="CHEBI:134278"/>
    </reaction>
</comment>
<comment type="subunit">
    <text evidence="1">Homodimer.</text>
</comment>
<comment type="similarity">
    <text evidence="1">Belongs to the class I-like SAM-binding methyltransferase superfamily. Cx-SAM synthase family.</text>
</comment>